<keyword id="KW-0961">Cell wall biogenesis/degradation</keyword>
<keyword id="KW-0309">Germination</keyword>
<keyword id="KW-0378">Hydrolase</keyword>
<keyword id="KW-1185">Reference proteome</keyword>
<keyword id="KW-0964">Secreted</keyword>
<keyword id="KW-0749">Sporulation</keyword>
<name>CWLJ_BACSU</name>
<organism>
    <name type="scientific">Bacillus subtilis (strain 168)</name>
    <dbReference type="NCBI Taxonomy" id="224308"/>
    <lineage>
        <taxon>Bacteria</taxon>
        <taxon>Bacillati</taxon>
        <taxon>Bacillota</taxon>
        <taxon>Bacilli</taxon>
        <taxon>Bacillales</taxon>
        <taxon>Bacillaceae</taxon>
        <taxon>Bacillus</taxon>
    </lineage>
</organism>
<proteinExistence type="evidence at protein level"/>
<protein>
    <recommendedName>
        <fullName>Cell wall hydrolase CwlJ</fullName>
    </recommendedName>
</protein>
<gene>
    <name type="primary">cwlJ</name>
    <name type="synonym">ycbQ</name>
    <name type="ordered locus">BSU02600</name>
</gene>
<reference key="1">
    <citation type="journal article" date="1995" name="Microbiology">
        <title>Determination of a 21548 bp nucleotide sequence around the 24 degrees region of the Bacillus subtilis chromosome.</title>
        <authorList>
            <person name="Ogawa K."/>
            <person name="Akagawa E."/>
            <person name="Nakamura K."/>
            <person name="Yamane K."/>
        </authorList>
    </citation>
    <scope>NUCLEOTIDE SEQUENCE [GENOMIC DNA]</scope>
    <source>
        <strain>168</strain>
    </source>
</reference>
<reference key="2">
    <citation type="journal article" date="1997" name="Nature">
        <title>The complete genome sequence of the Gram-positive bacterium Bacillus subtilis.</title>
        <authorList>
            <person name="Kunst F."/>
            <person name="Ogasawara N."/>
            <person name="Moszer I."/>
            <person name="Albertini A.M."/>
            <person name="Alloni G."/>
            <person name="Azevedo V."/>
            <person name="Bertero M.G."/>
            <person name="Bessieres P."/>
            <person name="Bolotin A."/>
            <person name="Borchert S."/>
            <person name="Borriss R."/>
            <person name="Boursier L."/>
            <person name="Brans A."/>
            <person name="Braun M."/>
            <person name="Brignell S.C."/>
            <person name="Bron S."/>
            <person name="Brouillet S."/>
            <person name="Bruschi C.V."/>
            <person name="Caldwell B."/>
            <person name="Capuano V."/>
            <person name="Carter N.M."/>
            <person name="Choi S.-K."/>
            <person name="Codani J.-J."/>
            <person name="Connerton I.F."/>
            <person name="Cummings N.J."/>
            <person name="Daniel R.A."/>
            <person name="Denizot F."/>
            <person name="Devine K.M."/>
            <person name="Duesterhoeft A."/>
            <person name="Ehrlich S.D."/>
            <person name="Emmerson P.T."/>
            <person name="Entian K.-D."/>
            <person name="Errington J."/>
            <person name="Fabret C."/>
            <person name="Ferrari E."/>
            <person name="Foulger D."/>
            <person name="Fritz C."/>
            <person name="Fujita M."/>
            <person name="Fujita Y."/>
            <person name="Fuma S."/>
            <person name="Galizzi A."/>
            <person name="Galleron N."/>
            <person name="Ghim S.-Y."/>
            <person name="Glaser P."/>
            <person name="Goffeau A."/>
            <person name="Golightly E.J."/>
            <person name="Grandi G."/>
            <person name="Guiseppi G."/>
            <person name="Guy B.J."/>
            <person name="Haga K."/>
            <person name="Haiech J."/>
            <person name="Harwood C.R."/>
            <person name="Henaut A."/>
            <person name="Hilbert H."/>
            <person name="Holsappel S."/>
            <person name="Hosono S."/>
            <person name="Hullo M.-F."/>
            <person name="Itaya M."/>
            <person name="Jones L.-M."/>
            <person name="Joris B."/>
            <person name="Karamata D."/>
            <person name="Kasahara Y."/>
            <person name="Klaerr-Blanchard M."/>
            <person name="Klein C."/>
            <person name="Kobayashi Y."/>
            <person name="Koetter P."/>
            <person name="Koningstein G."/>
            <person name="Krogh S."/>
            <person name="Kumano M."/>
            <person name="Kurita K."/>
            <person name="Lapidus A."/>
            <person name="Lardinois S."/>
            <person name="Lauber J."/>
            <person name="Lazarevic V."/>
            <person name="Lee S.-M."/>
            <person name="Levine A."/>
            <person name="Liu H."/>
            <person name="Masuda S."/>
            <person name="Mauel C."/>
            <person name="Medigue C."/>
            <person name="Medina N."/>
            <person name="Mellado R.P."/>
            <person name="Mizuno M."/>
            <person name="Moestl D."/>
            <person name="Nakai S."/>
            <person name="Noback M."/>
            <person name="Noone D."/>
            <person name="O'Reilly M."/>
            <person name="Ogawa K."/>
            <person name="Ogiwara A."/>
            <person name="Oudega B."/>
            <person name="Park S.-H."/>
            <person name="Parro V."/>
            <person name="Pohl T.M."/>
            <person name="Portetelle D."/>
            <person name="Porwollik S."/>
            <person name="Prescott A.M."/>
            <person name="Presecan E."/>
            <person name="Pujic P."/>
            <person name="Purnelle B."/>
            <person name="Rapoport G."/>
            <person name="Rey M."/>
            <person name="Reynolds S."/>
            <person name="Rieger M."/>
            <person name="Rivolta C."/>
            <person name="Rocha E."/>
            <person name="Roche B."/>
            <person name="Rose M."/>
            <person name="Sadaie Y."/>
            <person name="Sato T."/>
            <person name="Scanlan E."/>
            <person name="Schleich S."/>
            <person name="Schroeter R."/>
            <person name="Scoffone F."/>
            <person name="Sekiguchi J."/>
            <person name="Sekowska A."/>
            <person name="Seror S.J."/>
            <person name="Serror P."/>
            <person name="Shin B.-S."/>
            <person name="Soldo B."/>
            <person name="Sorokin A."/>
            <person name="Tacconi E."/>
            <person name="Takagi T."/>
            <person name="Takahashi H."/>
            <person name="Takemaru K."/>
            <person name="Takeuchi M."/>
            <person name="Tamakoshi A."/>
            <person name="Tanaka T."/>
            <person name="Terpstra P."/>
            <person name="Tognoni A."/>
            <person name="Tosato V."/>
            <person name="Uchiyama S."/>
            <person name="Vandenbol M."/>
            <person name="Vannier F."/>
            <person name="Vassarotti A."/>
            <person name="Viari A."/>
            <person name="Wambutt R."/>
            <person name="Wedler E."/>
            <person name="Wedler H."/>
            <person name="Weitzenegger T."/>
            <person name="Winters P."/>
            <person name="Wipat A."/>
            <person name="Yamamoto H."/>
            <person name="Yamane K."/>
            <person name="Yasumoto K."/>
            <person name="Yata K."/>
            <person name="Yoshida K."/>
            <person name="Yoshikawa H.-F."/>
            <person name="Zumstein E."/>
            <person name="Yoshikawa H."/>
            <person name="Danchin A."/>
        </authorList>
    </citation>
    <scope>NUCLEOTIDE SEQUENCE [LARGE SCALE GENOMIC DNA]</scope>
    <source>
        <strain>168</strain>
    </source>
</reference>
<reference key="3">
    <citation type="journal article" date="2009" name="Microbiology">
        <title>From a consortium sequence to a unified sequence: the Bacillus subtilis 168 reference genome a decade later.</title>
        <authorList>
            <person name="Barbe V."/>
            <person name="Cruveiller S."/>
            <person name="Kunst F."/>
            <person name="Lenoble P."/>
            <person name="Meurice G."/>
            <person name="Sekowska A."/>
            <person name="Vallenet D."/>
            <person name="Wang T."/>
            <person name="Moszer I."/>
            <person name="Medigue C."/>
            <person name="Danchin A."/>
        </authorList>
    </citation>
    <scope>SEQUENCE REVISION TO 86</scope>
</reference>
<reference key="4">
    <citation type="journal article" date="1998" name="J. Bacteriol.">
        <title>Regulation and characterization of a newly deduced cell wall hydrolase gene (cwlJ) which affects germination of Bacillus subtilis spores.</title>
        <authorList>
            <person name="Ishikawa S."/>
            <person name="Yamane K."/>
            <person name="Sekiguchi J."/>
        </authorList>
    </citation>
    <scope>CHARACTERIZATION</scope>
    <source>
        <strain>168</strain>
    </source>
</reference>
<reference key="5">
    <citation type="journal article" date="2001" name="J. Bacteriol.">
        <title>Genetic requirements for induction of germination of spores of Bacillus subtilis by Ca(2+)-dipicolinate.</title>
        <authorList>
            <person name="Paidhungat M."/>
            <person name="Ragkousi K."/>
            <person name="Setlow P."/>
        </authorList>
    </citation>
    <scope>ACTIVITY REGULATION</scope>
    <source>
        <strain>168 / PS832</strain>
    </source>
</reference>
<reference key="6">
    <citation type="journal article" date="2002" name="J. Bacteriol.">
        <title>Localization of the cortex lytic enzyme CwlJ in spores of Bacillus subtilis.</title>
        <authorList>
            <person name="Bagyan I."/>
            <person name="Setlow P."/>
        </authorList>
    </citation>
    <scope>DEVELOPMENTAL STAGE</scope>
</reference>
<reference key="7">
    <citation type="journal article" date="2002" name="Microbiology">
        <title>Analysis of spore cortex lytic enzymes and related proteins in Bacillus subtilis endospore germination.</title>
        <authorList>
            <person name="Chirakkal H."/>
            <person name="O'Rourke M."/>
            <person name="Atrih A."/>
            <person name="Foster S.J."/>
            <person name="Moir A."/>
        </authorList>
    </citation>
    <scope>DEVELOPMENTAL STAGE</scope>
    <source>
        <strain>168</strain>
    </source>
</reference>
<comment type="function">
    <text>Probable spore cortex-lytic enzyme involved in the depolymerization of cortex peptidoglycan during germination.</text>
</comment>
<comment type="activity regulation">
    <text evidence="1">Activated, directly or indirectly, by endogenous spore dipicolinic acid released in response to nutrients. Is also activated by exogenous Ca(2+)-dipicolinic acid.</text>
</comment>
<comment type="subcellular location">
    <subcellularLocation>
        <location evidence="4">Secreted</location>
    </subcellularLocation>
</comment>
<comment type="developmental stage">
    <text evidence="2 3">Expressed during sporulation; in mother cell compartment, then located in the spore coat.</text>
</comment>
<comment type="induction">
    <text>Expression is sigma E-dependent.</text>
</comment>
<comment type="similarity">
    <text evidence="4">Belongs to the CwlJ family.</text>
</comment>
<sequence length="142" mass="16463">MAVVRATSADVDLMARLLRAEAEGEGKQGMLLVGNVGINRLRANCSDFKGLRTIRQMIYQPHAFEAVTHGYFYQRARDSERALARRSINGERRWPAKFSLWYFRPQGDCPAQWYNQPFVARFKSHCFYQPTAETCENVYNTF</sequence>
<accession>P42249</accession>
<dbReference type="EMBL" id="D30808">
    <property type="protein sequence ID" value="BAA06481.1"/>
    <property type="molecule type" value="Genomic_DNA"/>
</dbReference>
<dbReference type="EMBL" id="AL009126">
    <property type="protein sequence ID" value="CAB12054.2"/>
    <property type="molecule type" value="Genomic_DNA"/>
</dbReference>
<dbReference type="PIR" id="H69610">
    <property type="entry name" value="H69610"/>
</dbReference>
<dbReference type="RefSeq" id="NP_388142.2">
    <property type="nucleotide sequence ID" value="NC_000964.3"/>
</dbReference>
<dbReference type="RefSeq" id="WP_003246500.1">
    <property type="nucleotide sequence ID" value="NZ_OZ025638.1"/>
</dbReference>
<dbReference type="SMR" id="P42249"/>
<dbReference type="FunCoup" id="P42249">
    <property type="interactions" value="58"/>
</dbReference>
<dbReference type="IntAct" id="P42249">
    <property type="interactions" value="3"/>
</dbReference>
<dbReference type="STRING" id="224308.BSU02600"/>
<dbReference type="PaxDb" id="224308-BSU02600"/>
<dbReference type="EnsemblBacteria" id="CAB12054">
    <property type="protein sequence ID" value="CAB12054"/>
    <property type="gene ID" value="BSU_02600"/>
</dbReference>
<dbReference type="GeneID" id="938399"/>
<dbReference type="KEGG" id="bsu:BSU02600"/>
<dbReference type="PATRIC" id="fig|224308.179.peg.269"/>
<dbReference type="eggNOG" id="COG3773">
    <property type="taxonomic scope" value="Bacteria"/>
</dbReference>
<dbReference type="InParanoid" id="P42249"/>
<dbReference type="OrthoDB" id="1642705at2"/>
<dbReference type="PhylomeDB" id="P42249"/>
<dbReference type="BioCyc" id="BSUB:BSU02600-MONOMER"/>
<dbReference type="Proteomes" id="UP000001570">
    <property type="component" value="Chromosome"/>
</dbReference>
<dbReference type="GO" id="GO:0005576">
    <property type="term" value="C:extracellular region"/>
    <property type="evidence" value="ECO:0007669"/>
    <property type="project" value="UniProtKB-SubCell"/>
</dbReference>
<dbReference type="GO" id="GO:0016787">
    <property type="term" value="F:hydrolase activity"/>
    <property type="evidence" value="ECO:0007669"/>
    <property type="project" value="UniProtKB-KW"/>
</dbReference>
<dbReference type="GO" id="GO:0071555">
    <property type="term" value="P:cell wall organization"/>
    <property type="evidence" value="ECO:0007669"/>
    <property type="project" value="UniProtKB-KW"/>
</dbReference>
<dbReference type="GO" id="GO:0030435">
    <property type="term" value="P:sporulation resulting in formation of a cellular spore"/>
    <property type="evidence" value="ECO:0007669"/>
    <property type="project" value="UniProtKB-KW"/>
</dbReference>
<dbReference type="Gene3D" id="1.10.10.2520">
    <property type="entry name" value="Cell wall hydrolase SleB, domain 1"/>
    <property type="match status" value="1"/>
</dbReference>
<dbReference type="InterPro" id="IPR011105">
    <property type="entry name" value="Cell_wall_hydrolase_SleB"/>
</dbReference>
<dbReference type="InterPro" id="IPR042047">
    <property type="entry name" value="SleB_dom1"/>
</dbReference>
<dbReference type="Pfam" id="PF07486">
    <property type="entry name" value="Hydrolase_2"/>
    <property type="match status" value="1"/>
</dbReference>
<evidence type="ECO:0000269" key="1">
    <source>
    </source>
</evidence>
<evidence type="ECO:0000269" key="2">
    <source>
    </source>
</evidence>
<evidence type="ECO:0000269" key="3">
    <source>
    </source>
</evidence>
<evidence type="ECO:0000305" key="4"/>
<feature type="chain" id="PRO_0000164426" description="Cell wall hydrolase CwlJ">
    <location>
        <begin position="1"/>
        <end position="142"/>
    </location>
</feature>
<feature type="sequence conflict" description="In Ref. 1; BAA06481." evidence="4" ref="1">
    <original>R</original>
    <variation>G</variation>
    <location>
        <position position="86"/>
    </location>
</feature>